<organism>
    <name type="scientific">Notothixos subaureus</name>
    <name type="common">Golden mistletoe</name>
    <dbReference type="NCBI Taxonomy" id="36002"/>
    <lineage>
        <taxon>Eukaryota</taxon>
        <taxon>Viridiplantae</taxon>
        <taxon>Streptophyta</taxon>
        <taxon>Embryophyta</taxon>
        <taxon>Tracheophyta</taxon>
        <taxon>Spermatophyta</taxon>
        <taxon>Magnoliopsida</taxon>
        <taxon>eudicotyledons</taxon>
        <taxon>Gunneridae</taxon>
        <taxon>Pentapetalae</taxon>
        <taxon>Santalales</taxon>
        <taxon>Viscaceae</taxon>
        <taxon>Notothixos</taxon>
    </lineage>
</organism>
<protein>
    <recommendedName>
        <fullName evidence="1">Ribulose bisphosphate carboxylase large chain</fullName>
        <shortName evidence="1">RuBisCO large subunit</shortName>
        <ecNumber evidence="1">4.1.1.39</ecNumber>
    </recommendedName>
</protein>
<evidence type="ECO:0000255" key="1">
    <source>
        <dbReference type="HAMAP-Rule" id="MF_01338"/>
    </source>
</evidence>
<name>RBL_NOTSU</name>
<proteinExistence type="inferred from homology"/>
<geneLocation type="chloroplast"/>
<gene>
    <name evidence="1" type="primary">rbcL</name>
</gene>
<comment type="function">
    <text evidence="1">RuBisCO catalyzes two reactions: the carboxylation of D-ribulose 1,5-bisphosphate, the primary event in carbon dioxide fixation, as well as the oxidative fragmentation of the pentose substrate in the photorespiration process. Both reactions occur simultaneously and in competition at the same active site.</text>
</comment>
<comment type="catalytic activity">
    <reaction evidence="1">
        <text>2 (2R)-3-phosphoglycerate + 2 H(+) = D-ribulose 1,5-bisphosphate + CO2 + H2O</text>
        <dbReference type="Rhea" id="RHEA:23124"/>
        <dbReference type="ChEBI" id="CHEBI:15377"/>
        <dbReference type="ChEBI" id="CHEBI:15378"/>
        <dbReference type="ChEBI" id="CHEBI:16526"/>
        <dbReference type="ChEBI" id="CHEBI:57870"/>
        <dbReference type="ChEBI" id="CHEBI:58272"/>
        <dbReference type="EC" id="4.1.1.39"/>
    </reaction>
</comment>
<comment type="catalytic activity">
    <reaction evidence="1">
        <text>D-ribulose 1,5-bisphosphate + O2 = 2-phosphoglycolate + (2R)-3-phosphoglycerate + 2 H(+)</text>
        <dbReference type="Rhea" id="RHEA:36631"/>
        <dbReference type="ChEBI" id="CHEBI:15378"/>
        <dbReference type="ChEBI" id="CHEBI:15379"/>
        <dbReference type="ChEBI" id="CHEBI:57870"/>
        <dbReference type="ChEBI" id="CHEBI:58033"/>
        <dbReference type="ChEBI" id="CHEBI:58272"/>
    </reaction>
</comment>
<comment type="cofactor">
    <cofactor evidence="1">
        <name>Mg(2+)</name>
        <dbReference type="ChEBI" id="CHEBI:18420"/>
    </cofactor>
    <text evidence="1">Binds 1 Mg(2+) ion per subunit.</text>
</comment>
<comment type="subunit">
    <text evidence="1">Heterohexadecamer of 8 large chains and 8 small chains; disulfide-linked. The disulfide link is formed within the large subunit homodimers.</text>
</comment>
<comment type="subcellular location">
    <subcellularLocation>
        <location>Plastid</location>
        <location>Chloroplast</location>
    </subcellularLocation>
</comment>
<comment type="PTM">
    <text evidence="1">The disulfide bond which can form in the large chain dimeric partners within the hexadecamer appears to be associated with oxidative stress and protein turnover.</text>
</comment>
<comment type="miscellaneous">
    <text evidence="1">The basic functional RuBisCO is composed of a large chain homodimer in a 'head-to-tail' conformation. In form I RuBisCO this homodimer is arranged in a barrel-like tetramer with the small subunits forming a tetrameric 'cap' on each end of the 'barrel'.</text>
</comment>
<comment type="similarity">
    <text evidence="1">Belongs to the RuBisCO large chain family. Type I subfamily.</text>
</comment>
<keyword id="KW-0007">Acetylation</keyword>
<keyword id="KW-0113">Calvin cycle</keyword>
<keyword id="KW-0120">Carbon dioxide fixation</keyword>
<keyword id="KW-0150">Chloroplast</keyword>
<keyword id="KW-1015">Disulfide bond</keyword>
<keyword id="KW-0456">Lyase</keyword>
<keyword id="KW-0460">Magnesium</keyword>
<keyword id="KW-0479">Metal-binding</keyword>
<keyword id="KW-0488">Methylation</keyword>
<keyword id="KW-0503">Monooxygenase</keyword>
<keyword id="KW-0560">Oxidoreductase</keyword>
<keyword id="KW-0601">Photorespiration</keyword>
<keyword id="KW-0602">Photosynthesis</keyword>
<keyword id="KW-0934">Plastid</keyword>
<reference key="1">
    <citation type="journal article" date="1995" name="Ann. Mo. Bot. Gard.">
        <title>A comparision of angiosperm phylogenies from nuclear 18S rRNA and rbcL sequences.</title>
        <authorList>
            <person name="Nickrent D.L."/>
            <person name="Soltis D.E."/>
        </authorList>
    </citation>
    <scope>NUCLEOTIDE SEQUENCE [GENOMIC DNA]</scope>
</reference>
<dbReference type="EC" id="4.1.1.39" evidence="1"/>
<dbReference type="EMBL" id="L26075">
    <property type="protein sequence ID" value="AAB97299.1"/>
    <property type="molecule type" value="Genomic_DNA"/>
</dbReference>
<dbReference type="SMR" id="Q32701"/>
<dbReference type="GO" id="GO:0009507">
    <property type="term" value="C:chloroplast"/>
    <property type="evidence" value="ECO:0007669"/>
    <property type="project" value="UniProtKB-SubCell"/>
</dbReference>
<dbReference type="GO" id="GO:0000287">
    <property type="term" value="F:magnesium ion binding"/>
    <property type="evidence" value="ECO:0007669"/>
    <property type="project" value="UniProtKB-UniRule"/>
</dbReference>
<dbReference type="GO" id="GO:0004497">
    <property type="term" value="F:monooxygenase activity"/>
    <property type="evidence" value="ECO:0007669"/>
    <property type="project" value="UniProtKB-KW"/>
</dbReference>
<dbReference type="GO" id="GO:0016984">
    <property type="term" value="F:ribulose-bisphosphate carboxylase activity"/>
    <property type="evidence" value="ECO:0007669"/>
    <property type="project" value="UniProtKB-UniRule"/>
</dbReference>
<dbReference type="GO" id="GO:0009853">
    <property type="term" value="P:photorespiration"/>
    <property type="evidence" value="ECO:0007669"/>
    <property type="project" value="UniProtKB-KW"/>
</dbReference>
<dbReference type="GO" id="GO:0019253">
    <property type="term" value="P:reductive pentose-phosphate cycle"/>
    <property type="evidence" value="ECO:0007669"/>
    <property type="project" value="UniProtKB-UniRule"/>
</dbReference>
<dbReference type="CDD" id="cd08212">
    <property type="entry name" value="RuBisCO_large_I"/>
    <property type="match status" value="1"/>
</dbReference>
<dbReference type="FunFam" id="3.20.20.110:FF:000001">
    <property type="entry name" value="Ribulose bisphosphate carboxylase large chain"/>
    <property type="match status" value="1"/>
</dbReference>
<dbReference type="FunFam" id="3.30.70.150:FF:000001">
    <property type="entry name" value="Ribulose bisphosphate carboxylase large chain"/>
    <property type="match status" value="1"/>
</dbReference>
<dbReference type="Gene3D" id="3.20.20.110">
    <property type="entry name" value="Ribulose bisphosphate carboxylase, large subunit, C-terminal domain"/>
    <property type="match status" value="1"/>
</dbReference>
<dbReference type="Gene3D" id="3.30.70.150">
    <property type="entry name" value="RuBisCO large subunit, N-terminal domain"/>
    <property type="match status" value="1"/>
</dbReference>
<dbReference type="HAMAP" id="MF_01338">
    <property type="entry name" value="RuBisCO_L_type1"/>
    <property type="match status" value="1"/>
</dbReference>
<dbReference type="InterPro" id="IPR033966">
    <property type="entry name" value="RuBisCO"/>
</dbReference>
<dbReference type="InterPro" id="IPR020878">
    <property type="entry name" value="RuBisCo_large_chain_AS"/>
</dbReference>
<dbReference type="InterPro" id="IPR000685">
    <property type="entry name" value="RuBisCO_lsu_C"/>
</dbReference>
<dbReference type="InterPro" id="IPR036376">
    <property type="entry name" value="RuBisCO_lsu_C_sf"/>
</dbReference>
<dbReference type="InterPro" id="IPR017443">
    <property type="entry name" value="RuBisCO_lsu_fd_N"/>
</dbReference>
<dbReference type="InterPro" id="IPR036422">
    <property type="entry name" value="RuBisCO_lsu_N_sf"/>
</dbReference>
<dbReference type="InterPro" id="IPR020888">
    <property type="entry name" value="RuBisCO_lsuI"/>
</dbReference>
<dbReference type="NCBIfam" id="NF003252">
    <property type="entry name" value="PRK04208.1"/>
    <property type="match status" value="1"/>
</dbReference>
<dbReference type="PANTHER" id="PTHR42704">
    <property type="entry name" value="RIBULOSE BISPHOSPHATE CARBOXYLASE"/>
    <property type="match status" value="1"/>
</dbReference>
<dbReference type="PANTHER" id="PTHR42704:SF16">
    <property type="entry name" value="RIBULOSE BISPHOSPHATE CARBOXYLASE LARGE CHAIN"/>
    <property type="match status" value="1"/>
</dbReference>
<dbReference type="Pfam" id="PF00016">
    <property type="entry name" value="RuBisCO_large"/>
    <property type="match status" value="1"/>
</dbReference>
<dbReference type="Pfam" id="PF02788">
    <property type="entry name" value="RuBisCO_large_N"/>
    <property type="match status" value="1"/>
</dbReference>
<dbReference type="SFLD" id="SFLDG01052">
    <property type="entry name" value="RuBisCO"/>
    <property type="match status" value="1"/>
</dbReference>
<dbReference type="SFLD" id="SFLDS00014">
    <property type="entry name" value="RuBisCO"/>
    <property type="match status" value="1"/>
</dbReference>
<dbReference type="SFLD" id="SFLDG00301">
    <property type="entry name" value="RuBisCO-like_proteins"/>
    <property type="match status" value="1"/>
</dbReference>
<dbReference type="SUPFAM" id="SSF51649">
    <property type="entry name" value="RuBisCo, C-terminal domain"/>
    <property type="match status" value="1"/>
</dbReference>
<dbReference type="SUPFAM" id="SSF54966">
    <property type="entry name" value="RuBisCO, large subunit, small (N-terminal) domain"/>
    <property type="match status" value="1"/>
</dbReference>
<dbReference type="PROSITE" id="PS00157">
    <property type="entry name" value="RUBISCO_LARGE"/>
    <property type="match status" value="1"/>
</dbReference>
<feature type="propeptide" id="PRO_0000031323" evidence="1">
    <location>
        <begin position="1"/>
        <end position="2"/>
    </location>
</feature>
<feature type="chain" id="PRO_0000031324" description="Ribulose bisphosphate carboxylase large chain">
    <location>
        <begin position="3"/>
        <end position="475"/>
    </location>
</feature>
<feature type="active site" description="Proton acceptor" evidence="1">
    <location>
        <position position="175"/>
    </location>
</feature>
<feature type="active site" description="Proton acceptor" evidence="1">
    <location>
        <position position="294"/>
    </location>
</feature>
<feature type="binding site" description="in homodimeric partner" evidence="1">
    <location>
        <position position="123"/>
    </location>
    <ligand>
        <name>substrate</name>
    </ligand>
</feature>
<feature type="binding site" evidence="1">
    <location>
        <position position="173"/>
    </location>
    <ligand>
        <name>substrate</name>
    </ligand>
</feature>
<feature type="binding site" evidence="1">
    <location>
        <position position="177"/>
    </location>
    <ligand>
        <name>substrate</name>
    </ligand>
</feature>
<feature type="binding site" description="via carbamate group" evidence="1">
    <location>
        <position position="201"/>
    </location>
    <ligand>
        <name>Mg(2+)</name>
        <dbReference type="ChEBI" id="CHEBI:18420"/>
    </ligand>
</feature>
<feature type="binding site" evidence="1">
    <location>
        <position position="203"/>
    </location>
    <ligand>
        <name>Mg(2+)</name>
        <dbReference type="ChEBI" id="CHEBI:18420"/>
    </ligand>
</feature>
<feature type="binding site" evidence="1">
    <location>
        <position position="204"/>
    </location>
    <ligand>
        <name>Mg(2+)</name>
        <dbReference type="ChEBI" id="CHEBI:18420"/>
    </ligand>
</feature>
<feature type="binding site" evidence="1">
    <location>
        <position position="295"/>
    </location>
    <ligand>
        <name>substrate</name>
    </ligand>
</feature>
<feature type="binding site" evidence="1">
    <location>
        <position position="327"/>
    </location>
    <ligand>
        <name>substrate</name>
    </ligand>
</feature>
<feature type="binding site" evidence="1">
    <location>
        <position position="379"/>
    </location>
    <ligand>
        <name>substrate</name>
    </ligand>
</feature>
<feature type="site" description="Transition state stabilizer" evidence="1">
    <location>
        <position position="334"/>
    </location>
</feature>
<feature type="modified residue" description="N-acetylproline" evidence="1">
    <location>
        <position position="3"/>
    </location>
</feature>
<feature type="modified residue" description="N6,N6,N6-trimethyllysine" evidence="1">
    <location>
        <position position="14"/>
    </location>
</feature>
<feature type="modified residue" description="N6-carboxylysine" evidence="1">
    <location>
        <position position="201"/>
    </location>
</feature>
<feature type="disulfide bond" description="Interchain; in linked form" evidence="1">
    <location>
        <position position="247"/>
    </location>
</feature>
<accession>Q32701</accession>
<sequence length="475" mass="52463">MSPQTETKASVGFKAGVKDYKLTYYTPDYETKDTDILAAFRVTPQPGVPPEEAGAAVRAESSTGTWTTVWTDGLTSLDRYKGRCYHIEPVAGEENQYIAYVAYPLDLFEEGSVTNMFTSIVGNVFGFKALRALRLEGLRIPPAYSKTFQGPPHGIQVERDKLNKYGRPLLGCTIKPKLGLSAKNYGRAVYECLRGGLDFTKDDENVNSQPFMRWRDRFVFCAEAIDKAQAETGEIKGHYLNATAGTCEEMIKRAVFARELGVPIVMHDYLTGGFTANTSLAHYCRDNGLLLHIHRAMHAVIDRQKNHGIHFRVLAKALRMSGGDHIHAGTVVGKLEGERGITLGFVDLLRDDFIEKDRSRGIYFTQDWVSLPGVLPVASGGIHVWHMPALTEIFGDDSVLQFGGGTLGHPWGNAPGAVANRVALEACVQARNEGGDLAREGNEIIREASKWSPELAAACEVWKEIKFEFQAMDTL</sequence>